<name>MPRA_MYCBP</name>
<reference key="1">
    <citation type="journal article" date="2007" name="Proc. Natl. Acad. Sci. U.S.A.">
        <title>Genome plasticity of BCG and impact on vaccine efficacy.</title>
        <authorList>
            <person name="Brosch R."/>
            <person name="Gordon S.V."/>
            <person name="Garnier T."/>
            <person name="Eiglmeier K."/>
            <person name="Frigui W."/>
            <person name="Valenti P."/>
            <person name="Dos Santos S."/>
            <person name="Duthoy S."/>
            <person name="Lacroix C."/>
            <person name="Garcia-Pelayo C."/>
            <person name="Inwald J.K."/>
            <person name="Golby P."/>
            <person name="Garcia J.N."/>
            <person name="Hewinson R.G."/>
            <person name="Behr M.A."/>
            <person name="Quail M.A."/>
            <person name="Churcher C."/>
            <person name="Barrell B.G."/>
            <person name="Parkhill J."/>
            <person name="Cole S.T."/>
        </authorList>
    </citation>
    <scope>NUCLEOTIDE SEQUENCE [LARGE SCALE GENOMIC DNA]</scope>
    <source>
        <strain>BCG / Pasteur 1173P2</strain>
    </source>
</reference>
<evidence type="ECO:0000250" key="1"/>
<evidence type="ECO:0000255" key="2">
    <source>
        <dbReference type="PROSITE-ProRule" id="PRU00169"/>
    </source>
</evidence>
<evidence type="ECO:0000255" key="3">
    <source>
        <dbReference type="PROSITE-ProRule" id="PRU01091"/>
    </source>
</evidence>
<evidence type="ECO:0000305" key="4"/>
<sequence>MSVRILVVDDDRAVRESLRRSLSFNGYSVELAHDGVEALDMIASDRPDALVLDVMMPRLDGLEVCRQLRSTGDDLPILVLTARDSVSERVAGLDAGADDYLPKPFALEELLARMRALLRRTKPEDAAESMAMRFSDLTLDPVTREVNRGQRRISLTRTEFALLEMLIANPRRVLTRSRILEEVWGFDFPTSGNALEVYVGYLRRKTEADGEPRLIHTVRGVGYVLRETPP</sequence>
<keyword id="KW-0963">Cytoplasm</keyword>
<keyword id="KW-0238">DNA-binding</keyword>
<keyword id="KW-0597">Phosphoprotein</keyword>
<keyword id="KW-0346">Stress response</keyword>
<keyword id="KW-0804">Transcription</keyword>
<keyword id="KW-0805">Transcription regulation</keyword>
<keyword id="KW-0902">Two-component regulatory system</keyword>
<keyword id="KW-0843">Virulence</keyword>
<comment type="function">
    <text evidence="1">Member of the two-component regulatory system MprB/MprA which contributes to maintaining a balance among several systems involved in stress resistance and is required for establishment and maintenance of persistent infection in the host. Functions as a transcriptional regulator that recognizes a 19-bp nucleotide motif comprizing two loosely conserved 8-bp direct DNA-binding motif repeats separated by a 3-bp spacer region (By similarity).</text>
</comment>
<comment type="subcellular location">
    <subcellularLocation>
        <location evidence="4">Cytoplasm</location>
    </subcellularLocation>
</comment>
<comment type="PTM">
    <text evidence="1">Phosphorylated and dephosphorylated by MprB.</text>
</comment>
<organism>
    <name type="scientific">Mycobacterium bovis (strain BCG / Pasteur 1173P2)</name>
    <dbReference type="NCBI Taxonomy" id="410289"/>
    <lineage>
        <taxon>Bacteria</taxon>
        <taxon>Bacillati</taxon>
        <taxon>Actinomycetota</taxon>
        <taxon>Actinomycetes</taxon>
        <taxon>Mycobacteriales</taxon>
        <taxon>Mycobacteriaceae</taxon>
        <taxon>Mycobacterium</taxon>
        <taxon>Mycobacterium tuberculosis complex</taxon>
    </lineage>
</organism>
<accession>A1KHB7</accession>
<gene>
    <name type="primary">mprA</name>
    <name type="ordered locus">BCG_1036</name>
</gene>
<dbReference type="EMBL" id="AM408590">
    <property type="protein sequence ID" value="CAL71023.1"/>
    <property type="molecule type" value="Genomic_DNA"/>
</dbReference>
<dbReference type="SMR" id="A1KHB7"/>
<dbReference type="KEGG" id="mbb:BCG_1036"/>
<dbReference type="HOGENOM" id="CLU_000445_30_1_11"/>
<dbReference type="Proteomes" id="UP000001472">
    <property type="component" value="Chromosome"/>
</dbReference>
<dbReference type="GO" id="GO:0005829">
    <property type="term" value="C:cytosol"/>
    <property type="evidence" value="ECO:0007669"/>
    <property type="project" value="TreeGrafter"/>
</dbReference>
<dbReference type="GO" id="GO:0032993">
    <property type="term" value="C:protein-DNA complex"/>
    <property type="evidence" value="ECO:0007669"/>
    <property type="project" value="TreeGrafter"/>
</dbReference>
<dbReference type="GO" id="GO:0000156">
    <property type="term" value="F:phosphorelay response regulator activity"/>
    <property type="evidence" value="ECO:0007669"/>
    <property type="project" value="TreeGrafter"/>
</dbReference>
<dbReference type="GO" id="GO:0000976">
    <property type="term" value="F:transcription cis-regulatory region binding"/>
    <property type="evidence" value="ECO:0007669"/>
    <property type="project" value="TreeGrafter"/>
</dbReference>
<dbReference type="GO" id="GO:0006355">
    <property type="term" value="P:regulation of DNA-templated transcription"/>
    <property type="evidence" value="ECO:0007669"/>
    <property type="project" value="InterPro"/>
</dbReference>
<dbReference type="CDD" id="cd17627">
    <property type="entry name" value="REC_OmpR_PrrA-like"/>
    <property type="match status" value="1"/>
</dbReference>
<dbReference type="CDD" id="cd00383">
    <property type="entry name" value="trans_reg_C"/>
    <property type="match status" value="1"/>
</dbReference>
<dbReference type="FunFam" id="3.40.50.2300:FF:000001">
    <property type="entry name" value="DNA-binding response regulator PhoB"/>
    <property type="match status" value="1"/>
</dbReference>
<dbReference type="FunFam" id="1.10.10.10:FF:000005">
    <property type="entry name" value="Two-component system response regulator"/>
    <property type="match status" value="1"/>
</dbReference>
<dbReference type="Gene3D" id="3.40.50.2300">
    <property type="match status" value="1"/>
</dbReference>
<dbReference type="Gene3D" id="6.10.250.690">
    <property type="match status" value="1"/>
</dbReference>
<dbReference type="Gene3D" id="1.10.10.10">
    <property type="entry name" value="Winged helix-like DNA-binding domain superfamily/Winged helix DNA-binding domain"/>
    <property type="match status" value="1"/>
</dbReference>
<dbReference type="InterPro" id="IPR011006">
    <property type="entry name" value="CheY-like_superfamily"/>
</dbReference>
<dbReference type="InterPro" id="IPR001867">
    <property type="entry name" value="OmpR/PhoB-type_DNA-bd"/>
</dbReference>
<dbReference type="InterPro" id="IPR001789">
    <property type="entry name" value="Sig_transdc_resp-reg_receiver"/>
</dbReference>
<dbReference type="InterPro" id="IPR039420">
    <property type="entry name" value="WalR-like"/>
</dbReference>
<dbReference type="InterPro" id="IPR036388">
    <property type="entry name" value="WH-like_DNA-bd_sf"/>
</dbReference>
<dbReference type="PANTHER" id="PTHR48111">
    <property type="entry name" value="REGULATOR OF RPOS"/>
    <property type="match status" value="1"/>
</dbReference>
<dbReference type="PANTHER" id="PTHR48111:SF22">
    <property type="entry name" value="REGULATOR OF RPOS"/>
    <property type="match status" value="1"/>
</dbReference>
<dbReference type="Pfam" id="PF00072">
    <property type="entry name" value="Response_reg"/>
    <property type="match status" value="1"/>
</dbReference>
<dbReference type="Pfam" id="PF00486">
    <property type="entry name" value="Trans_reg_C"/>
    <property type="match status" value="1"/>
</dbReference>
<dbReference type="SMART" id="SM00448">
    <property type="entry name" value="REC"/>
    <property type="match status" value="1"/>
</dbReference>
<dbReference type="SMART" id="SM00862">
    <property type="entry name" value="Trans_reg_C"/>
    <property type="match status" value="1"/>
</dbReference>
<dbReference type="SUPFAM" id="SSF52172">
    <property type="entry name" value="CheY-like"/>
    <property type="match status" value="1"/>
</dbReference>
<dbReference type="PROSITE" id="PS51755">
    <property type="entry name" value="OMPR_PHOB"/>
    <property type="match status" value="1"/>
</dbReference>
<dbReference type="PROSITE" id="PS50110">
    <property type="entry name" value="RESPONSE_REGULATORY"/>
    <property type="match status" value="1"/>
</dbReference>
<feature type="chain" id="PRO_0000308420" description="Response regulator MprA">
    <location>
        <begin position="1"/>
        <end position="230"/>
    </location>
</feature>
<feature type="domain" description="Response regulatory" evidence="2">
    <location>
        <begin position="4"/>
        <end position="118"/>
    </location>
</feature>
<feature type="DNA-binding region" description="OmpR/PhoB-type" evidence="3">
    <location>
        <begin position="129"/>
        <end position="227"/>
    </location>
</feature>
<feature type="modified residue" description="4-aspartylphosphate" evidence="2">
    <location>
        <position position="48"/>
    </location>
</feature>
<proteinExistence type="inferred from homology"/>
<protein>
    <recommendedName>
        <fullName>Response regulator MprA</fullName>
    </recommendedName>
    <alternativeName>
        <fullName>Mycobacterial persistence regulator A</fullName>
    </alternativeName>
</protein>